<gene>
    <name type="ordered locus">TM_0370</name>
</gene>
<organism>
    <name type="scientific">Thermotoga maritima (strain ATCC 43589 / DSM 3109 / JCM 10099 / NBRC 100826 / MSB8)</name>
    <dbReference type="NCBI Taxonomy" id="243274"/>
    <lineage>
        <taxon>Bacteria</taxon>
        <taxon>Thermotogati</taxon>
        <taxon>Thermotogota</taxon>
        <taxon>Thermotogae</taxon>
        <taxon>Thermotogales</taxon>
        <taxon>Thermotogaceae</taxon>
        <taxon>Thermotoga</taxon>
    </lineage>
</organism>
<reference key="1">
    <citation type="journal article" date="1999" name="Nature">
        <title>Evidence for lateral gene transfer between Archaea and Bacteria from genome sequence of Thermotoga maritima.</title>
        <authorList>
            <person name="Nelson K.E."/>
            <person name="Clayton R.A."/>
            <person name="Gill S.R."/>
            <person name="Gwinn M.L."/>
            <person name="Dodson R.J."/>
            <person name="Haft D.H."/>
            <person name="Hickey E.K."/>
            <person name="Peterson J.D."/>
            <person name="Nelson W.C."/>
            <person name="Ketchum K.A."/>
            <person name="McDonald L.A."/>
            <person name="Utterback T.R."/>
            <person name="Malek J.A."/>
            <person name="Linher K.D."/>
            <person name="Garrett M.M."/>
            <person name="Stewart A.M."/>
            <person name="Cotton M.D."/>
            <person name="Pratt M.S."/>
            <person name="Phillips C.A."/>
            <person name="Richardson D.L."/>
            <person name="Heidelberg J.F."/>
            <person name="Sutton G.G."/>
            <person name="Fleischmann R.D."/>
            <person name="Eisen J.A."/>
            <person name="White O."/>
            <person name="Salzberg S.L."/>
            <person name="Smith H.O."/>
            <person name="Venter J.C."/>
            <person name="Fraser C.M."/>
        </authorList>
    </citation>
    <scope>NUCLEOTIDE SEQUENCE [LARGE SCALE GENOMIC DNA]</scope>
    <source>
        <strain>ATCC 43589 / DSM 3109 / JCM 10099 / NBRC 100826 / MSB8</strain>
    </source>
</reference>
<comment type="similarity">
    <text evidence="1">Belongs to the UPF0273 family.</text>
</comment>
<comment type="sequence caution" evidence="2">
    <conflict type="erroneous initiation">
        <sequence resource="EMBL-CDS" id="AAD35457"/>
    </conflict>
</comment>
<proteinExistence type="inferred from homology"/>
<sequence length="242" mass="26813">MIKRVKTGIPGMDEILHGGIPERNIVLISGGPGTGKTIFSQQFIWNGLQMGEPGIYVALEEHPVQVKKNMEVFGWNVDPFEKEGKFAIVDAFTGGIGEYAEKEKYVVRDIDDVRELAEVLKRAVRETQAKRVVIDSVTTLYITKPAMARSIIFQLKRILSGLGCTSLFVSQVSVTEKGFGGPGVEHGVDGIIRLDLDEIDGELKRSLIVWKMRGTSHSMRRHPFEITDKGIVIYPSEGGEGR</sequence>
<evidence type="ECO:0000255" key="1">
    <source>
        <dbReference type="HAMAP-Rule" id="MF_01076"/>
    </source>
</evidence>
<evidence type="ECO:0000305" key="2"/>
<accession>Q9WYK4</accession>
<dbReference type="EMBL" id="AE000512">
    <property type="protein sequence ID" value="AAD35457.1"/>
    <property type="status" value="ALT_INIT"/>
    <property type="molecule type" value="Genomic_DNA"/>
</dbReference>
<dbReference type="PIR" id="H72384">
    <property type="entry name" value="H72384"/>
</dbReference>
<dbReference type="RefSeq" id="NP_228181.1">
    <property type="nucleotide sequence ID" value="NC_000853.1"/>
</dbReference>
<dbReference type="RefSeq" id="WP_004083183.1">
    <property type="nucleotide sequence ID" value="NZ_CP011107.1"/>
</dbReference>
<dbReference type="SMR" id="Q9WYK4"/>
<dbReference type="STRING" id="243274.TM_0370"/>
<dbReference type="PaxDb" id="243274-THEMA_02865"/>
<dbReference type="EnsemblBacteria" id="AAD35457">
    <property type="protein sequence ID" value="AAD35457"/>
    <property type="gene ID" value="TM_0370"/>
</dbReference>
<dbReference type="KEGG" id="tma:TM0370"/>
<dbReference type="KEGG" id="tmi:THEMA_02865"/>
<dbReference type="KEGG" id="tmm:Tmari_0368"/>
<dbReference type="KEGG" id="tmw:THMA_0378"/>
<dbReference type="PATRIC" id="fig|243274.5.peg.375"/>
<dbReference type="eggNOG" id="COG0467">
    <property type="taxonomic scope" value="Bacteria"/>
</dbReference>
<dbReference type="InParanoid" id="Q9WYK4"/>
<dbReference type="OrthoDB" id="9783783at2"/>
<dbReference type="Proteomes" id="UP000008183">
    <property type="component" value="Chromosome"/>
</dbReference>
<dbReference type="GO" id="GO:0005524">
    <property type="term" value="F:ATP binding"/>
    <property type="evidence" value="ECO:0007669"/>
    <property type="project" value="UniProtKB-UniRule"/>
</dbReference>
<dbReference type="CDD" id="cd19486">
    <property type="entry name" value="KaiC_arch"/>
    <property type="match status" value="1"/>
</dbReference>
<dbReference type="Gene3D" id="3.40.50.300">
    <property type="entry name" value="P-loop containing nucleotide triphosphate hydrolases"/>
    <property type="match status" value="1"/>
</dbReference>
<dbReference type="HAMAP" id="MF_01076">
    <property type="entry name" value="UPF0273"/>
    <property type="match status" value="1"/>
</dbReference>
<dbReference type="InterPro" id="IPR014774">
    <property type="entry name" value="KaiC-like_dom"/>
</dbReference>
<dbReference type="InterPro" id="IPR010624">
    <property type="entry name" value="KaiC_dom"/>
</dbReference>
<dbReference type="InterPro" id="IPR027417">
    <property type="entry name" value="P-loop_NTPase"/>
</dbReference>
<dbReference type="InterPro" id="IPR022475">
    <property type="entry name" value="UPF0273_KaiC-like"/>
</dbReference>
<dbReference type="NCBIfam" id="TIGR03877">
    <property type="entry name" value="thermo_KaiC_1"/>
    <property type="match status" value="1"/>
</dbReference>
<dbReference type="PANTHER" id="PTHR43637">
    <property type="entry name" value="UPF0273 PROTEIN TM_0370"/>
    <property type="match status" value="1"/>
</dbReference>
<dbReference type="PANTHER" id="PTHR43637:SF1">
    <property type="entry name" value="UPF0273 PROTEIN TM_0370"/>
    <property type="match status" value="1"/>
</dbReference>
<dbReference type="Pfam" id="PF06745">
    <property type="entry name" value="ATPase"/>
    <property type="match status" value="1"/>
</dbReference>
<dbReference type="PRINTS" id="PR01874">
    <property type="entry name" value="DNAREPAIRADA"/>
</dbReference>
<dbReference type="SUPFAM" id="SSF52540">
    <property type="entry name" value="P-loop containing nucleoside triphosphate hydrolases"/>
    <property type="match status" value="1"/>
</dbReference>
<dbReference type="PROSITE" id="PS51146">
    <property type="entry name" value="KAIC"/>
    <property type="match status" value="1"/>
</dbReference>
<protein>
    <recommendedName>
        <fullName evidence="1">UPF0273 protein TM_0370</fullName>
    </recommendedName>
</protein>
<feature type="chain" id="PRO_0000184583" description="UPF0273 protein TM_0370">
    <location>
        <begin position="1"/>
        <end position="242"/>
    </location>
</feature>
<feature type="domain" description="KaiC" evidence="1">
    <location>
        <begin position="3"/>
        <end position="242"/>
    </location>
</feature>
<feature type="binding site" evidence="1">
    <location>
        <begin position="30"/>
        <end position="37"/>
    </location>
    <ligand>
        <name>ATP</name>
        <dbReference type="ChEBI" id="CHEBI:30616"/>
    </ligand>
</feature>
<keyword id="KW-0067">ATP-binding</keyword>
<keyword id="KW-0547">Nucleotide-binding</keyword>
<keyword id="KW-1185">Reference proteome</keyword>
<name>Y370_THEMA</name>